<keyword id="KW-0456">Lyase</keyword>
<keyword id="KW-0994">Organellar chromatophore</keyword>
<keyword id="KW-0934">Plastid</keyword>
<protein>
    <recommendedName>
        <fullName evidence="1">Chromophore lyase CpcT/CpeT</fullName>
        <ecNumber evidence="1">4.-.-.-</ecNumber>
    </recommendedName>
</protein>
<feature type="chain" id="PRO_0000403171" description="Chromophore lyase CpcT/CpeT">
    <location>
        <begin position="1"/>
        <end position="201"/>
    </location>
</feature>
<dbReference type="EC" id="4.-.-.-" evidence="1"/>
<dbReference type="EMBL" id="CP000815">
    <property type="protein sequence ID" value="ACB43055.1"/>
    <property type="molecule type" value="Genomic_DNA"/>
</dbReference>
<dbReference type="RefSeq" id="YP_002049265.1">
    <property type="nucleotide sequence ID" value="NC_011087.1"/>
</dbReference>
<dbReference type="SMR" id="B1X536"/>
<dbReference type="GeneID" id="6481869"/>
<dbReference type="GO" id="GO:0070111">
    <property type="term" value="C:organellar chromatophore"/>
    <property type="evidence" value="ECO:0007669"/>
    <property type="project" value="UniProtKB-SubCell"/>
</dbReference>
<dbReference type="GO" id="GO:0009536">
    <property type="term" value="C:plastid"/>
    <property type="evidence" value="ECO:0007669"/>
    <property type="project" value="UniProtKB-KW"/>
</dbReference>
<dbReference type="GO" id="GO:0016829">
    <property type="term" value="F:lyase activity"/>
    <property type="evidence" value="ECO:0007669"/>
    <property type="project" value="UniProtKB-KW"/>
</dbReference>
<dbReference type="CDD" id="cd16338">
    <property type="entry name" value="CpcT"/>
    <property type="match status" value="1"/>
</dbReference>
<dbReference type="Gene3D" id="2.40.128.590">
    <property type="entry name" value="CpcT/CpeT domain"/>
    <property type="match status" value="1"/>
</dbReference>
<dbReference type="HAMAP" id="MF_01460">
    <property type="entry name" value="Chrphore_lyase_CpxT"/>
    <property type="match status" value="1"/>
</dbReference>
<dbReference type="InterPro" id="IPR010404">
    <property type="entry name" value="CpcT/CpeT"/>
</dbReference>
<dbReference type="InterPro" id="IPR038672">
    <property type="entry name" value="CpcT/CpeT_sf"/>
</dbReference>
<dbReference type="PANTHER" id="PTHR35137">
    <property type="entry name" value="CHROMOPHORE LYASE CRL, CHLOROPLASTIC"/>
    <property type="match status" value="1"/>
</dbReference>
<dbReference type="PANTHER" id="PTHR35137:SF1">
    <property type="entry name" value="CHROMOPHORE LYASE CRL, CHLOROPLASTIC"/>
    <property type="match status" value="1"/>
</dbReference>
<dbReference type="Pfam" id="PF06206">
    <property type="entry name" value="CpeT"/>
    <property type="match status" value="1"/>
</dbReference>
<proteinExistence type="inferred from homology"/>
<geneLocation type="organellar chromatophore"/>
<comment type="function">
    <text evidence="1">Covalently attaches a chromophore to Cys residue(s) of phycobiliproteins.</text>
</comment>
<comment type="subcellular location">
    <subcellularLocation>
        <location>Plastid</location>
        <location>Organellar chromatophore</location>
    </subcellularLocation>
</comment>
<comment type="similarity">
    <text evidence="1">Belongs to the CpcT/CpeT biliprotein lyase family.</text>
</comment>
<evidence type="ECO:0000255" key="1">
    <source>
        <dbReference type="HAMAP-Rule" id="MF_01460"/>
    </source>
</evidence>
<name>CPXT_PAUCH</name>
<accession>B1X536</accession>
<organism>
    <name type="scientific">Paulinella chromatophora</name>
    <dbReference type="NCBI Taxonomy" id="39717"/>
    <lineage>
        <taxon>Eukaryota</taxon>
        <taxon>Sar</taxon>
        <taxon>Rhizaria</taxon>
        <taxon>Cercozoa</taxon>
        <taxon>Imbricatea</taxon>
        <taxon>Silicofilosea</taxon>
        <taxon>Euglyphida</taxon>
        <taxon>Paulinellidae</taxon>
        <taxon>Paulinella</taxon>
    </lineage>
</organism>
<reference key="1">
    <citation type="journal article" date="2008" name="Curr. Biol.">
        <title>Chromatophore genome sequence of Paulinella sheds light on acquisition of photosynthesis by eukaryotes.</title>
        <authorList>
            <person name="Nowack E.C.M."/>
            <person name="Melkonian M."/>
            <person name="Gloeckner G."/>
        </authorList>
    </citation>
    <scope>NUCLEOTIDE SEQUENCE [LARGE SCALE GENOMIC DNA]</scope>
</reference>
<sequence>MSASLSQLVHQLSARFNNQQQAFDNPPLYAHIVVNCRPLVHLLPGSLLIEQSYAMDPLKPYRIRVLRAQTRDEKLIIFSYSLSDEQKYWGSVYEPERMLKIEEKDLQAIEGCNYIVRKKNSNFIGEVEPGCRCLVDRKGVTTYIVSKFELTNKGEMRTLDRGHNPVTHEQLWGSLGGVFEFNRTTDFSKEIPYDWIEEWKK</sequence>
<gene>
    <name evidence="1" type="primary">cpcT</name>
    <name type="ordered locus">PCC_0629</name>
</gene>